<organismHost>
    <name type="scientific">Dicentrarchus labrax</name>
    <name type="common">European seabass</name>
    <name type="synonym">Morone labrax</name>
    <dbReference type="NCBI Taxonomy" id="13489"/>
</organismHost>
<organismHost>
    <name type="scientific">Epinephelus akaara</name>
    <name type="common">Hong Kong grouper</name>
    <name type="synonym">Serranus akaara</name>
    <dbReference type="NCBI Taxonomy" id="215347"/>
</organismHost>
<organismHost>
    <name type="scientific">Hippoglossus hippoglossus</name>
    <name type="common">Atlantic halibut</name>
    <name type="synonym">Pleuronectes hippoglossus</name>
    <dbReference type="NCBI Taxonomy" id="8267"/>
</organismHost>
<organismHost>
    <name type="scientific">Lates calcarifer</name>
    <name type="common">Barramundi</name>
    <name type="synonym">Holocentrus calcarifer</name>
    <dbReference type="NCBI Taxonomy" id="8187"/>
</organismHost>
<organismHost>
    <name type="scientific">Oplegnathus fasciatus</name>
    <name type="common">Barred knifejaw</name>
    <name type="synonym">Scaradon fasciatus</name>
    <dbReference type="NCBI Taxonomy" id="163134"/>
</organismHost>
<reference key="1">
    <citation type="journal article" date="1999" name="J. Gen. Virol.">
        <title>Sequence of the non-structural protein gene encoded by RNA1 of striped jack nervous necrosis virus.</title>
        <authorList>
            <person name="Nagai T."/>
            <person name="Nishizawa T."/>
        </authorList>
    </citation>
    <scope>NUCLEOTIDE SEQUENCE [GENOMIC RNA]</scope>
</reference>
<reference key="2">
    <citation type="journal article" date="2001" name="J. Gen. Virol.">
        <title>Establishment of an infectious RNA transcription system for striped jack nervous necrosis virus, the type species of the betanodaviruses.</title>
        <authorList>
            <person name="Iwamoto T."/>
            <person name="Mise K."/>
            <person name="Mori K."/>
            <person name="Arimoto M."/>
            <person name="Nakai T."/>
            <person name="Okuno T."/>
        </authorList>
    </citation>
    <scope>NUCLEOTIDE SEQUENCE [GENOMIC RNA]</scope>
</reference>
<organism>
    <name type="scientific">Striped jack nervous necrosis virus</name>
    <name type="common">SjNNV</name>
    <dbReference type="NCBI Taxonomy" id="35297"/>
    <lineage>
        <taxon>Viruses</taxon>
        <taxon>Riboviria</taxon>
        <taxon>Orthornavirae</taxon>
        <taxon>Kitrinoviricota</taxon>
        <taxon>Magsaviricetes</taxon>
        <taxon>Nodamuvirales</taxon>
        <taxon>Nodaviridae</taxon>
        <taxon>Betanodavirus</taxon>
    </lineage>
</organism>
<comment type="function">
    <text evidence="3">RNA-dependent RNA polymerase which replicates the viral genome composed of 2 RNA segments, RNA1 and RNA2.</text>
</comment>
<comment type="catalytic activity">
    <reaction evidence="1">
        <text>RNA(n) + a ribonucleoside 5'-triphosphate = RNA(n+1) + diphosphate</text>
        <dbReference type="Rhea" id="RHEA:21248"/>
        <dbReference type="Rhea" id="RHEA-COMP:14527"/>
        <dbReference type="Rhea" id="RHEA-COMP:17342"/>
        <dbReference type="ChEBI" id="CHEBI:33019"/>
        <dbReference type="ChEBI" id="CHEBI:61557"/>
        <dbReference type="ChEBI" id="CHEBI:140395"/>
        <dbReference type="EC" id="2.7.7.48"/>
    </reaction>
</comment>
<comment type="similarity">
    <text evidence="3">Belongs to the nodaviridae RNA polymerase family.</text>
</comment>
<protein>
    <recommendedName>
        <fullName>RNA-directed RNA polymerase</fullName>
        <shortName>RdRp</shortName>
        <ecNumber>2.7.7.48</ecNumber>
    </recommendedName>
    <alternativeName>
        <fullName>RNA replicase</fullName>
        <shortName>Protein A</shortName>
    </alternativeName>
</protein>
<feature type="chain" id="PRO_0000222450" description="RNA-directed RNA polymerase">
    <location>
        <begin position="1"/>
        <end position="983"/>
    </location>
</feature>
<feature type="domain" description="RdRp catalytic" evidence="1">
    <location>
        <begin position="579"/>
        <end position="701"/>
    </location>
</feature>
<feature type="region of interest" description="Disordered" evidence="2">
    <location>
        <begin position="879"/>
        <end position="983"/>
    </location>
</feature>
<feature type="compositionally biased region" description="Polar residues" evidence="2">
    <location>
        <begin position="883"/>
        <end position="899"/>
    </location>
</feature>
<feature type="compositionally biased region" description="Basic and acidic residues" evidence="2">
    <location>
        <begin position="914"/>
        <end position="937"/>
    </location>
</feature>
<feature type="compositionally biased region" description="Low complexity" evidence="2">
    <location>
        <begin position="943"/>
        <end position="960"/>
    </location>
</feature>
<accession>Q9QAZ8</accession>
<name>RDRP_SJNNV</name>
<keyword id="KW-0547">Nucleotide-binding</keyword>
<keyword id="KW-0548">Nucleotidyltransferase</keyword>
<keyword id="KW-1185">Reference proteome</keyword>
<keyword id="KW-0696">RNA-directed RNA polymerase</keyword>
<keyword id="KW-0808">Transferase</keyword>
<keyword id="KW-0693">Viral RNA replication</keyword>
<dbReference type="EC" id="2.7.7.48"/>
<dbReference type="EMBL" id="AB025018">
    <property type="protein sequence ID" value="BAA84210.1"/>
    <property type="molecule type" value="Genomic_RNA"/>
</dbReference>
<dbReference type="EMBL" id="AB056571">
    <property type="protein sequence ID" value="BAB64329.1"/>
    <property type="molecule type" value="Genomic_RNA"/>
</dbReference>
<dbReference type="RefSeq" id="NP_599247.1">
    <property type="nucleotide sequence ID" value="NC_003448.1"/>
</dbReference>
<dbReference type="SMR" id="Q9QAZ8"/>
<dbReference type="GeneID" id="991144"/>
<dbReference type="KEGG" id="vg:991144"/>
<dbReference type="OrthoDB" id="155at10239"/>
<dbReference type="Proteomes" id="UP000000414">
    <property type="component" value="Genome"/>
</dbReference>
<dbReference type="GO" id="GO:0000166">
    <property type="term" value="F:nucleotide binding"/>
    <property type="evidence" value="ECO:0007669"/>
    <property type="project" value="UniProtKB-KW"/>
</dbReference>
<dbReference type="GO" id="GO:0003723">
    <property type="term" value="F:RNA binding"/>
    <property type="evidence" value="ECO:0007669"/>
    <property type="project" value="InterPro"/>
</dbReference>
<dbReference type="GO" id="GO:0003968">
    <property type="term" value="F:RNA-directed RNA polymerase activity"/>
    <property type="evidence" value="ECO:0007669"/>
    <property type="project" value="UniProtKB-KW"/>
</dbReference>
<dbReference type="GO" id="GO:0006351">
    <property type="term" value="P:DNA-templated transcription"/>
    <property type="evidence" value="ECO:0007669"/>
    <property type="project" value="InterPro"/>
</dbReference>
<dbReference type="GO" id="GO:0039694">
    <property type="term" value="P:viral RNA genome replication"/>
    <property type="evidence" value="ECO:0007669"/>
    <property type="project" value="InterPro"/>
</dbReference>
<dbReference type="CDD" id="cd23173">
    <property type="entry name" value="ps-ssRNAv_Nodaviridae_RdRp"/>
    <property type="match status" value="1"/>
</dbReference>
<dbReference type="InterPro" id="IPR043502">
    <property type="entry name" value="DNA/RNA_pol_sf"/>
</dbReference>
<dbReference type="InterPro" id="IPR043647">
    <property type="entry name" value="Noda_Vmethyltr_dom"/>
</dbReference>
<dbReference type="InterPro" id="IPR001205">
    <property type="entry name" value="RNA-dir_pol_C"/>
</dbReference>
<dbReference type="InterPro" id="IPR007094">
    <property type="entry name" value="RNA-dir_pol_PSvirus"/>
</dbReference>
<dbReference type="Pfam" id="PF19222">
    <property type="entry name" value="Noda_Vmethyltr"/>
    <property type="match status" value="1"/>
</dbReference>
<dbReference type="Pfam" id="PF00680">
    <property type="entry name" value="RdRP_1"/>
    <property type="match status" value="1"/>
</dbReference>
<dbReference type="SUPFAM" id="SSF56672">
    <property type="entry name" value="DNA/RNA polymerases"/>
    <property type="match status" value="1"/>
</dbReference>
<dbReference type="PROSITE" id="PS50507">
    <property type="entry name" value="RDRP_SSRNA_POS"/>
    <property type="match status" value="1"/>
</dbReference>
<evidence type="ECO:0000255" key="1">
    <source>
        <dbReference type="PROSITE-ProRule" id="PRU00539"/>
    </source>
</evidence>
<evidence type="ECO:0000256" key="2">
    <source>
        <dbReference type="SAM" id="MobiDB-lite"/>
    </source>
</evidence>
<evidence type="ECO:0000305" key="3"/>
<sequence length="983" mass="110630">MRRFEFELARMSGAAFCVVTGYRLLTSKWLADRVEDYRQRVIADRKQILRDAAVIRTSIQKQMELVRISVRKGHSHQEAATERNSATDTMIGVVEKCGYEPYIISPSPREKEYHGSRQFYSLADFRQDYRRDEITDRHVIVMTDVDYYVDMHELVGLGVPILLYTFQPSTVSGEVKDGYFTITDDHVHYRVAGGKDVRHRIWNYNQDTMFVRSKPRGFWASLKQILRDITGITALCGYLYLKLGIAPFGDQVTLFTVDQFKMGEHRNIVSIVPFATCRSNLLKISEYGAELDYMRYQQRNNNANFNAVTYISQEGPLISLGLEGNFASVQLPLQDFENIRTAYELSKNNNLSDTVRRSARSCKEAAIIHKCLQAGCDLASEVVHKPGELARHYQALGDTYDIDPSEQGKCYAREYAPGPLTQTAVFPSESRSNELATIDGRIAGPQAKAKSREHITPKMHKVARDFVRHLVPTAGLGRPYPLTYVEEHQTKPLQRARNDANRYHDEFTMIVKAFQKKEAYNAPNYPRNISTVPHTQNVKLSSYTYAFKEAVLQHVPWYMPTHTPAEIAEAVQSLAASSTELVETDYSKFDGTFLRFMRENVEFAIYKRWVHLDHLTELSTLLGNELQAPAVTRLGIKYDPDCSRLSGSALTTDGNSIANAFVSYLAGRQAGMDDDEAWTWIGIVYGDDGLRSGNVSDALLSKTASSLGFDLKIVNRAPRGSPVTFLSRVYLDPWSSPASVQSPLRTLLKLHTTCDTQSDIEDVGWAKTQAYLVTDCLTPFIGHWCRAYQRNCTARVVQYADYNDIPFWVKNEDHVGNSWPQSDSVDWNDVVANELGLTTAELLKHLAALDAYTGPVSGLPRLTTSLDLEPKMPVALDGEVQAGPSQQPQTDKDGTSPTGDRSAPRRARTALQDADGRACRSRRSDRSPGKRDANVRDKRQRRSTTPPRSRPSVPGPSSSGRRTDGDRVRGGAARQRQRRRSPV</sequence>
<proteinExistence type="inferred from homology"/>